<dbReference type="EC" id="4.1.1.37" evidence="1"/>
<dbReference type="EMBL" id="AL513382">
    <property type="protein sequence ID" value="CAD09477.1"/>
    <property type="molecule type" value="Genomic_DNA"/>
</dbReference>
<dbReference type="EMBL" id="AE014613">
    <property type="protein sequence ID" value="AAO70980.1"/>
    <property type="molecule type" value="Genomic_DNA"/>
</dbReference>
<dbReference type="RefSeq" id="NP_457907.1">
    <property type="nucleotide sequence ID" value="NC_003198.1"/>
</dbReference>
<dbReference type="RefSeq" id="WP_000137619.1">
    <property type="nucleotide sequence ID" value="NZ_WSUR01000043.1"/>
</dbReference>
<dbReference type="SMR" id="Q8Z329"/>
<dbReference type="STRING" id="220341.gene:17587578"/>
<dbReference type="KEGG" id="stt:t3464"/>
<dbReference type="KEGG" id="sty:STY3718"/>
<dbReference type="PATRIC" id="fig|220341.7.peg.3790"/>
<dbReference type="eggNOG" id="COG0407">
    <property type="taxonomic scope" value="Bacteria"/>
</dbReference>
<dbReference type="HOGENOM" id="CLU_040933_0_0_6"/>
<dbReference type="OMA" id="LWLMRQA"/>
<dbReference type="OrthoDB" id="9806656at2"/>
<dbReference type="UniPathway" id="UPA00251">
    <property type="reaction ID" value="UER00321"/>
</dbReference>
<dbReference type="Proteomes" id="UP000000541">
    <property type="component" value="Chromosome"/>
</dbReference>
<dbReference type="Proteomes" id="UP000002670">
    <property type="component" value="Chromosome"/>
</dbReference>
<dbReference type="GO" id="GO:0005829">
    <property type="term" value="C:cytosol"/>
    <property type="evidence" value="ECO:0007669"/>
    <property type="project" value="TreeGrafter"/>
</dbReference>
<dbReference type="GO" id="GO:0004853">
    <property type="term" value="F:uroporphyrinogen decarboxylase activity"/>
    <property type="evidence" value="ECO:0007669"/>
    <property type="project" value="UniProtKB-UniRule"/>
</dbReference>
<dbReference type="GO" id="GO:0019353">
    <property type="term" value="P:protoporphyrinogen IX biosynthetic process from glutamate"/>
    <property type="evidence" value="ECO:0007669"/>
    <property type="project" value="TreeGrafter"/>
</dbReference>
<dbReference type="CDD" id="cd00717">
    <property type="entry name" value="URO-D"/>
    <property type="match status" value="1"/>
</dbReference>
<dbReference type="FunFam" id="3.20.20.210:FF:000001">
    <property type="entry name" value="Uroporphyrinogen decarboxylase"/>
    <property type="match status" value="1"/>
</dbReference>
<dbReference type="Gene3D" id="3.20.20.210">
    <property type="match status" value="1"/>
</dbReference>
<dbReference type="HAMAP" id="MF_00218">
    <property type="entry name" value="URO_D"/>
    <property type="match status" value="1"/>
</dbReference>
<dbReference type="InterPro" id="IPR038071">
    <property type="entry name" value="UROD/MetE-like_sf"/>
</dbReference>
<dbReference type="InterPro" id="IPR006361">
    <property type="entry name" value="Uroporphyrinogen_deCO2ase_HemE"/>
</dbReference>
<dbReference type="InterPro" id="IPR000257">
    <property type="entry name" value="Uroporphyrinogen_deCOase"/>
</dbReference>
<dbReference type="NCBIfam" id="TIGR01464">
    <property type="entry name" value="hemE"/>
    <property type="match status" value="1"/>
</dbReference>
<dbReference type="PANTHER" id="PTHR21091">
    <property type="entry name" value="METHYLTETRAHYDROFOLATE:HOMOCYSTEINE METHYLTRANSFERASE RELATED"/>
    <property type="match status" value="1"/>
</dbReference>
<dbReference type="PANTHER" id="PTHR21091:SF169">
    <property type="entry name" value="UROPORPHYRINOGEN DECARBOXYLASE"/>
    <property type="match status" value="1"/>
</dbReference>
<dbReference type="Pfam" id="PF01208">
    <property type="entry name" value="URO-D"/>
    <property type="match status" value="1"/>
</dbReference>
<dbReference type="SUPFAM" id="SSF51726">
    <property type="entry name" value="UROD/MetE-like"/>
    <property type="match status" value="1"/>
</dbReference>
<dbReference type="PROSITE" id="PS00906">
    <property type="entry name" value="UROD_1"/>
    <property type="match status" value="1"/>
</dbReference>
<dbReference type="PROSITE" id="PS00907">
    <property type="entry name" value="UROD_2"/>
    <property type="match status" value="1"/>
</dbReference>
<keyword id="KW-0963">Cytoplasm</keyword>
<keyword id="KW-0210">Decarboxylase</keyword>
<keyword id="KW-0456">Lyase</keyword>
<keyword id="KW-0627">Porphyrin biosynthesis</keyword>
<organism>
    <name type="scientific">Salmonella typhi</name>
    <dbReference type="NCBI Taxonomy" id="90370"/>
    <lineage>
        <taxon>Bacteria</taxon>
        <taxon>Pseudomonadati</taxon>
        <taxon>Pseudomonadota</taxon>
        <taxon>Gammaproteobacteria</taxon>
        <taxon>Enterobacterales</taxon>
        <taxon>Enterobacteriaceae</taxon>
        <taxon>Salmonella</taxon>
    </lineage>
</organism>
<name>DCUP_SALTI</name>
<feature type="chain" id="PRO_0000187635" description="Uroporphyrinogen decarboxylase">
    <location>
        <begin position="1"/>
        <end position="354"/>
    </location>
</feature>
<feature type="binding site" evidence="1">
    <location>
        <begin position="27"/>
        <end position="31"/>
    </location>
    <ligand>
        <name>substrate</name>
    </ligand>
</feature>
<feature type="binding site" evidence="1">
    <location>
        <position position="46"/>
    </location>
    <ligand>
        <name>substrate</name>
    </ligand>
</feature>
<feature type="binding site" evidence="1">
    <location>
        <position position="77"/>
    </location>
    <ligand>
        <name>substrate</name>
    </ligand>
</feature>
<feature type="binding site" evidence="1">
    <location>
        <position position="154"/>
    </location>
    <ligand>
        <name>substrate</name>
    </ligand>
</feature>
<feature type="binding site" evidence="1">
    <location>
        <position position="209"/>
    </location>
    <ligand>
        <name>substrate</name>
    </ligand>
</feature>
<feature type="binding site" evidence="1">
    <location>
        <position position="327"/>
    </location>
    <ligand>
        <name>substrate</name>
    </ligand>
</feature>
<feature type="site" description="Transition state stabilizer" evidence="1">
    <location>
        <position position="77"/>
    </location>
</feature>
<accession>Q8Z329</accession>
<sequence>MTELKNDRYLRALLRQPVDVTPVWMMRQAGRYLPEYKATRAQAGDFMSLCKNAELACEVTLQPLRRYPLDAAILFSDILTIPDAMGLGLYFEAGEGPRFTAPVTCKADVDKLPIPDPEDELGYVMNAVRTIRRELKGEVPLIGFSGSPWTLATYMVEGGSSKAFTVIKKMMYADPQALHLLLDKLAKSVTLYLNAQIKAGAQSVMIFDTWGGVLTGRDYQQFSLYYMHKIVDGLLRENDGRRVPVTLFTKGGGQWLEAMAETGCDALGLDWTTDIADARRRVGHKVALQGNMDPSMLYAPPARIEDEVATILAGFGQGEGHVFNLGHGIHQDVPPEHAGAFVEAVHRLSAQYHN</sequence>
<evidence type="ECO:0000255" key="1">
    <source>
        <dbReference type="HAMAP-Rule" id="MF_00218"/>
    </source>
</evidence>
<comment type="function">
    <text evidence="1">Catalyzes the decarboxylation of four acetate groups of uroporphyrinogen-III to yield coproporphyrinogen-III.</text>
</comment>
<comment type="catalytic activity">
    <reaction evidence="1">
        <text>uroporphyrinogen III + 4 H(+) = coproporphyrinogen III + 4 CO2</text>
        <dbReference type="Rhea" id="RHEA:19865"/>
        <dbReference type="ChEBI" id="CHEBI:15378"/>
        <dbReference type="ChEBI" id="CHEBI:16526"/>
        <dbReference type="ChEBI" id="CHEBI:57308"/>
        <dbReference type="ChEBI" id="CHEBI:57309"/>
        <dbReference type="EC" id="4.1.1.37"/>
    </reaction>
</comment>
<comment type="pathway">
    <text evidence="1">Porphyrin-containing compound metabolism; protoporphyrin-IX biosynthesis; coproporphyrinogen-III from 5-aminolevulinate: step 4/4.</text>
</comment>
<comment type="subunit">
    <text evidence="1">Homodimer.</text>
</comment>
<comment type="subcellular location">
    <subcellularLocation>
        <location evidence="1">Cytoplasm</location>
    </subcellularLocation>
</comment>
<comment type="similarity">
    <text evidence="1">Belongs to the uroporphyrinogen decarboxylase family.</text>
</comment>
<gene>
    <name evidence="1" type="primary">hemE</name>
    <name type="ordered locus">STY3718</name>
    <name type="ordered locus">t3464</name>
</gene>
<proteinExistence type="inferred from homology"/>
<reference key="1">
    <citation type="journal article" date="2001" name="Nature">
        <title>Complete genome sequence of a multiple drug resistant Salmonella enterica serovar Typhi CT18.</title>
        <authorList>
            <person name="Parkhill J."/>
            <person name="Dougan G."/>
            <person name="James K.D."/>
            <person name="Thomson N.R."/>
            <person name="Pickard D."/>
            <person name="Wain J."/>
            <person name="Churcher C.M."/>
            <person name="Mungall K.L."/>
            <person name="Bentley S.D."/>
            <person name="Holden M.T.G."/>
            <person name="Sebaihia M."/>
            <person name="Baker S."/>
            <person name="Basham D."/>
            <person name="Brooks K."/>
            <person name="Chillingworth T."/>
            <person name="Connerton P."/>
            <person name="Cronin A."/>
            <person name="Davis P."/>
            <person name="Davies R.M."/>
            <person name="Dowd L."/>
            <person name="White N."/>
            <person name="Farrar J."/>
            <person name="Feltwell T."/>
            <person name="Hamlin N."/>
            <person name="Haque A."/>
            <person name="Hien T.T."/>
            <person name="Holroyd S."/>
            <person name="Jagels K."/>
            <person name="Krogh A."/>
            <person name="Larsen T.S."/>
            <person name="Leather S."/>
            <person name="Moule S."/>
            <person name="O'Gaora P."/>
            <person name="Parry C."/>
            <person name="Quail M.A."/>
            <person name="Rutherford K.M."/>
            <person name="Simmonds M."/>
            <person name="Skelton J."/>
            <person name="Stevens K."/>
            <person name="Whitehead S."/>
            <person name="Barrell B.G."/>
        </authorList>
    </citation>
    <scope>NUCLEOTIDE SEQUENCE [LARGE SCALE GENOMIC DNA]</scope>
    <source>
        <strain>CT18</strain>
    </source>
</reference>
<reference key="2">
    <citation type="journal article" date="2003" name="J. Bacteriol.">
        <title>Comparative genomics of Salmonella enterica serovar Typhi strains Ty2 and CT18.</title>
        <authorList>
            <person name="Deng W."/>
            <person name="Liou S.-R."/>
            <person name="Plunkett G. III"/>
            <person name="Mayhew G.F."/>
            <person name="Rose D.J."/>
            <person name="Burland V."/>
            <person name="Kodoyianni V."/>
            <person name="Schwartz D.C."/>
            <person name="Blattner F.R."/>
        </authorList>
    </citation>
    <scope>NUCLEOTIDE SEQUENCE [LARGE SCALE GENOMIC DNA]</scope>
    <source>
        <strain>ATCC 700931 / Ty2</strain>
    </source>
</reference>
<protein>
    <recommendedName>
        <fullName evidence="1">Uroporphyrinogen decarboxylase</fullName>
        <shortName evidence="1">UPD</shortName>
        <shortName evidence="1">URO-D</shortName>
        <ecNumber evidence="1">4.1.1.37</ecNumber>
    </recommendedName>
</protein>